<evidence type="ECO:0000255" key="1">
    <source>
        <dbReference type="HAMAP-Rule" id="MF_01465"/>
    </source>
</evidence>
<comment type="function">
    <text evidence="1">The central subunit of the protein translocation channel SecYEG. Consists of two halves formed by TMs 1-5 and 6-10. These two domains form a lateral gate at the front which open onto the bilayer between TMs 2 and 7, and are clamped together by SecE at the back. The channel is closed by both a pore ring composed of hydrophobic SecY resides and a short helix (helix 2A) on the extracellular side of the membrane which forms a plug. The plug probably moves laterally to allow the channel to open. The ring and the pore may move independently.</text>
</comment>
<comment type="subunit">
    <text evidence="1">Component of the Sec protein translocase complex. Heterotrimer consisting of SecY, SecE and SecG subunits. The heterotrimers can form oligomers, although 1 heterotrimer is thought to be able to translocate proteins. Interacts with the ribosome. Interacts with SecDF, and other proteins may be involved. Interacts with SecA.</text>
</comment>
<comment type="subcellular location">
    <subcellularLocation>
        <location evidence="1">Cell membrane</location>
        <topology evidence="1">Multi-pass membrane protein</topology>
    </subcellularLocation>
</comment>
<comment type="similarity">
    <text evidence="1">Belongs to the SecY/SEC61-alpha family.</text>
</comment>
<protein>
    <recommendedName>
        <fullName evidence="1">Protein translocase subunit SecY</fullName>
    </recommendedName>
</protein>
<name>SECY_STRGC</name>
<feature type="chain" id="PRO_0000414210" description="Protein translocase subunit SecY">
    <location>
        <begin position="1"/>
        <end position="436"/>
    </location>
</feature>
<feature type="transmembrane region" description="Helical" evidence="1">
    <location>
        <begin position="19"/>
        <end position="39"/>
    </location>
</feature>
<feature type="transmembrane region" description="Helical" evidence="1">
    <location>
        <begin position="68"/>
        <end position="88"/>
    </location>
</feature>
<feature type="transmembrane region" description="Helical" evidence="1">
    <location>
        <begin position="116"/>
        <end position="136"/>
    </location>
</feature>
<feature type="transmembrane region" description="Helical" evidence="1">
    <location>
        <begin position="151"/>
        <end position="171"/>
    </location>
</feature>
<feature type="transmembrane region" description="Helical" evidence="1">
    <location>
        <begin position="179"/>
        <end position="199"/>
    </location>
</feature>
<feature type="transmembrane region" description="Helical" evidence="1">
    <location>
        <begin position="216"/>
        <end position="236"/>
    </location>
</feature>
<feature type="transmembrane region" description="Helical" evidence="1">
    <location>
        <begin position="269"/>
        <end position="289"/>
    </location>
</feature>
<feature type="transmembrane region" description="Helical" evidence="1">
    <location>
        <begin position="313"/>
        <end position="333"/>
    </location>
</feature>
<feature type="transmembrane region" description="Helical" evidence="1">
    <location>
        <begin position="372"/>
        <end position="392"/>
    </location>
</feature>
<feature type="transmembrane region" description="Helical" evidence="1">
    <location>
        <begin position="395"/>
        <end position="415"/>
    </location>
</feature>
<keyword id="KW-1003">Cell membrane</keyword>
<keyword id="KW-0472">Membrane</keyword>
<keyword id="KW-0653">Protein transport</keyword>
<keyword id="KW-1185">Reference proteome</keyword>
<keyword id="KW-0811">Translocation</keyword>
<keyword id="KW-0812">Transmembrane</keyword>
<keyword id="KW-1133">Transmembrane helix</keyword>
<keyword id="KW-0813">Transport</keyword>
<proteinExistence type="inferred from homology"/>
<gene>
    <name evidence="1" type="primary">secY</name>
    <name type="ordered locus">SGO_1965</name>
</gene>
<accession>A8AZK5</accession>
<organism>
    <name type="scientific">Streptococcus gordonii (strain Challis / ATCC 35105 / BCRC 15272 / CH1 / DL1 / V288)</name>
    <dbReference type="NCBI Taxonomy" id="467705"/>
    <lineage>
        <taxon>Bacteria</taxon>
        <taxon>Bacillati</taxon>
        <taxon>Bacillota</taxon>
        <taxon>Bacilli</taxon>
        <taxon>Lactobacillales</taxon>
        <taxon>Streptococcaceae</taxon>
        <taxon>Streptococcus</taxon>
    </lineage>
</organism>
<dbReference type="EMBL" id="CP000725">
    <property type="protein sequence ID" value="ABV09955.1"/>
    <property type="molecule type" value="Genomic_DNA"/>
</dbReference>
<dbReference type="RefSeq" id="WP_012130962.1">
    <property type="nucleotide sequence ID" value="NC_009785.1"/>
</dbReference>
<dbReference type="SMR" id="A8AZK5"/>
<dbReference type="STRING" id="467705.SGO_1965"/>
<dbReference type="KEGG" id="sgo:SGO_1965"/>
<dbReference type="eggNOG" id="COG0201">
    <property type="taxonomic scope" value="Bacteria"/>
</dbReference>
<dbReference type="HOGENOM" id="CLU_030313_0_1_9"/>
<dbReference type="Proteomes" id="UP000001131">
    <property type="component" value="Chromosome"/>
</dbReference>
<dbReference type="GO" id="GO:0005886">
    <property type="term" value="C:plasma membrane"/>
    <property type="evidence" value="ECO:0007669"/>
    <property type="project" value="UniProtKB-SubCell"/>
</dbReference>
<dbReference type="GO" id="GO:0065002">
    <property type="term" value="P:intracellular protein transmembrane transport"/>
    <property type="evidence" value="ECO:0007669"/>
    <property type="project" value="UniProtKB-UniRule"/>
</dbReference>
<dbReference type="GO" id="GO:0006605">
    <property type="term" value="P:protein targeting"/>
    <property type="evidence" value="ECO:0007669"/>
    <property type="project" value="UniProtKB-UniRule"/>
</dbReference>
<dbReference type="GO" id="GO:0043952">
    <property type="term" value="P:protein transport by the Sec complex"/>
    <property type="evidence" value="ECO:0007669"/>
    <property type="project" value="UniProtKB-UniRule"/>
</dbReference>
<dbReference type="FunFam" id="1.10.3370.10:FF:000001">
    <property type="entry name" value="Preprotein translocase subunit SecY"/>
    <property type="match status" value="1"/>
</dbReference>
<dbReference type="Gene3D" id="1.10.3370.10">
    <property type="entry name" value="SecY subunit domain"/>
    <property type="match status" value="1"/>
</dbReference>
<dbReference type="HAMAP" id="MF_01465">
    <property type="entry name" value="SecY"/>
    <property type="match status" value="1"/>
</dbReference>
<dbReference type="InterPro" id="IPR026593">
    <property type="entry name" value="SecY"/>
</dbReference>
<dbReference type="InterPro" id="IPR002208">
    <property type="entry name" value="SecY/SEC61-alpha"/>
</dbReference>
<dbReference type="InterPro" id="IPR030659">
    <property type="entry name" value="SecY_CS"/>
</dbReference>
<dbReference type="InterPro" id="IPR023201">
    <property type="entry name" value="SecY_dom_sf"/>
</dbReference>
<dbReference type="NCBIfam" id="TIGR00967">
    <property type="entry name" value="3a0501s007"/>
    <property type="match status" value="1"/>
</dbReference>
<dbReference type="PANTHER" id="PTHR10906">
    <property type="entry name" value="SECY/SEC61-ALPHA FAMILY MEMBER"/>
    <property type="match status" value="1"/>
</dbReference>
<dbReference type="Pfam" id="PF00344">
    <property type="entry name" value="SecY"/>
    <property type="match status" value="1"/>
</dbReference>
<dbReference type="PIRSF" id="PIRSF004557">
    <property type="entry name" value="SecY"/>
    <property type="match status" value="1"/>
</dbReference>
<dbReference type="PRINTS" id="PR00303">
    <property type="entry name" value="SECYTRNLCASE"/>
</dbReference>
<dbReference type="SUPFAM" id="SSF103491">
    <property type="entry name" value="Preprotein translocase SecY subunit"/>
    <property type="match status" value="1"/>
</dbReference>
<dbReference type="PROSITE" id="PS00755">
    <property type="entry name" value="SECY_1"/>
    <property type="match status" value="1"/>
</dbReference>
<reference key="1">
    <citation type="journal article" date="2007" name="J. Bacteriol.">
        <title>Genome-wide transcriptional changes in Streptococcus gordonii in response to competence signaling peptide.</title>
        <authorList>
            <person name="Vickerman M.M."/>
            <person name="Iobst S."/>
            <person name="Jesionowski A.M."/>
            <person name="Gill S.R."/>
        </authorList>
    </citation>
    <scope>NUCLEOTIDE SEQUENCE [LARGE SCALE GENOMIC DNA]</scope>
    <source>
        <strain>Challis / ATCC 35105 / BCRC 15272 / CH1 / DL1 / V288</strain>
    </source>
</reference>
<sequence length="436" mass="47344">MFFKLLKDAFKIKQVRSKILFTIFIILVFRIGTTITVPGVNAKSLEALSGLSFLNMLSLVSGNAMKNFSVFALGVSPYITASIVVQLLQMDLLPKFVEWGKQGEVGRRKLNQATRYISLALAFVQSIGITAGFNALSSTKLVAAPNWQTYLFIGAVLTTGSMIVVWLGEQITDKGYGNGVSMIIFAGIVASIPEMVKGIYEDYFVNVPSDRLQSSIIFVACLIVAVLLIVYFTTYVQQAEYKIPIQYTKIAQGAPSSSYLPLKVNPAGVIPVIFASSITAAPAAVLQFLSASGNDWGWVRTAQSLLATTTPTGIAMYALLIILFTFFYTFVQINPEKAAENLQKSGAYIPGVRPGKGTEQFMSKLLRRLATVGSLFLGFISIIPIIAKDLFGLSDTVALGGTSLLIIIATGIEGMKQLEGYLLKRKYTGFMNTTTK</sequence>